<sequence length="242" mass="26797">MATVSMRDMLKAGVHFGHQTRYWNPKMKPFIFGARNRVHIINLEKTVPMFNEALAELVKVGEKKGKVLFVGTKRAASEAVKEAAIASNQYYVNNRWLGGMLTNYKTVRQSIKRLKELEVQSTDGTFDKLTKKEALMRTREMEKLEKSLGGIKDMGGLPDALFVIDADHEHIAIKEANNLGIPVFAVVDTNSNPDGVDYIIPGNDDAIRAVQLYLNAAASSLTEGRNKDVAAVAEKDGFVEAE</sequence>
<protein>
    <recommendedName>
        <fullName evidence="1">Small ribosomal subunit protein uS2</fullName>
    </recommendedName>
    <alternativeName>
        <fullName evidence="2">30S ribosomal protein S2</fullName>
    </alternativeName>
</protein>
<feature type="chain" id="PRO_0000134273" description="Small ribosomal subunit protein uS2">
    <location>
        <begin position="1"/>
        <end position="242"/>
    </location>
</feature>
<name>RS2_VIBVU</name>
<gene>
    <name evidence="1" type="primary">rpsB</name>
    <name type="ordered locus">VV1_1859</name>
</gene>
<reference key="1">
    <citation type="submission" date="2002-12" db="EMBL/GenBank/DDBJ databases">
        <title>Complete genome sequence of Vibrio vulnificus CMCP6.</title>
        <authorList>
            <person name="Rhee J.H."/>
            <person name="Kim S.Y."/>
            <person name="Chung S.S."/>
            <person name="Kim J.J."/>
            <person name="Moon Y.H."/>
            <person name="Jeong H."/>
            <person name="Choy H.E."/>
        </authorList>
    </citation>
    <scope>NUCLEOTIDE SEQUENCE [LARGE SCALE GENOMIC DNA]</scope>
    <source>
        <strain>CMCP6</strain>
    </source>
</reference>
<evidence type="ECO:0000255" key="1">
    <source>
        <dbReference type="HAMAP-Rule" id="MF_00291"/>
    </source>
</evidence>
<evidence type="ECO:0000305" key="2"/>
<comment type="similarity">
    <text evidence="1">Belongs to the universal ribosomal protein uS2 family.</text>
</comment>
<dbReference type="EMBL" id="AE016795">
    <property type="protein sequence ID" value="AAO10262.2"/>
    <property type="molecule type" value="Genomic_DNA"/>
</dbReference>
<dbReference type="RefSeq" id="WP_011079762.1">
    <property type="nucleotide sequence ID" value="NC_004459.3"/>
</dbReference>
<dbReference type="SMR" id="Q8DBG1"/>
<dbReference type="GeneID" id="93896087"/>
<dbReference type="KEGG" id="vvu:VV1_1859"/>
<dbReference type="HOGENOM" id="CLU_040318_1_2_6"/>
<dbReference type="Proteomes" id="UP000002275">
    <property type="component" value="Chromosome 1"/>
</dbReference>
<dbReference type="GO" id="GO:0022627">
    <property type="term" value="C:cytosolic small ribosomal subunit"/>
    <property type="evidence" value="ECO:0007669"/>
    <property type="project" value="TreeGrafter"/>
</dbReference>
<dbReference type="GO" id="GO:0003735">
    <property type="term" value="F:structural constituent of ribosome"/>
    <property type="evidence" value="ECO:0007669"/>
    <property type="project" value="InterPro"/>
</dbReference>
<dbReference type="GO" id="GO:0006412">
    <property type="term" value="P:translation"/>
    <property type="evidence" value="ECO:0007669"/>
    <property type="project" value="UniProtKB-UniRule"/>
</dbReference>
<dbReference type="CDD" id="cd01425">
    <property type="entry name" value="RPS2"/>
    <property type="match status" value="1"/>
</dbReference>
<dbReference type="FunFam" id="1.10.287.610:FF:000001">
    <property type="entry name" value="30S ribosomal protein S2"/>
    <property type="match status" value="1"/>
</dbReference>
<dbReference type="Gene3D" id="3.40.50.10490">
    <property type="entry name" value="Glucose-6-phosphate isomerase like protein, domain 1"/>
    <property type="match status" value="1"/>
</dbReference>
<dbReference type="Gene3D" id="1.10.287.610">
    <property type="entry name" value="Helix hairpin bin"/>
    <property type="match status" value="1"/>
</dbReference>
<dbReference type="HAMAP" id="MF_00291_B">
    <property type="entry name" value="Ribosomal_uS2_B"/>
    <property type="match status" value="1"/>
</dbReference>
<dbReference type="InterPro" id="IPR001865">
    <property type="entry name" value="Ribosomal_uS2"/>
</dbReference>
<dbReference type="InterPro" id="IPR005706">
    <property type="entry name" value="Ribosomal_uS2_bac/mit/plastid"/>
</dbReference>
<dbReference type="InterPro" id="IPR018130">
    <property type="entry name" value="Ribosomal_uS2_CS"/>
</dbReference>
<dbReference type="InterPro" id="IPR023591">
    <property type="entry name" value="Ribosomal_uS2_flav_dom_sf"/>
</dbReference>
<dbReference type="NCBIfam" id="TIGR01011">
    <property type="entry name" value="rpsB_bact"/>
    <property type="match status" value="1"/>
</dbReference>
<dbReference type="PANTHER" id="PTHR12534">
    <property type="entry name" value="30S RIBOSOMAL PROTEIN S2 PROKARYOTIC AND ORGANELLAR"/>
    <property type="match status" value="1"/>
</dbReference>
<dbReference type="PANTHER" id="PTHR12534:SF0">
    <property type="entry name" value="SMALL RIBOSOMAL SUBUNIT PROTEIN US2M"/>
    <property type="match status" value="1"/>
</dbReference>
<dbReference type="Pfam" id="PF00318">
    <property type="entry name" value="Ribosomal_S2"/>
    <property type="match status" value="1"/>
</dbReference>
<dbReference type="PRINTS" id="PR00395">
    <property type="entry name" value="RIBOSOMALS2"/>
</dbReference>
<dbReference type="SUPFAM" id="SSF52313">
    <property type="entry name" value="Ribosomal protein S2"/>
    <property type="match status" value="1"/>
</dbReference>
<dbReference type="PROSITE" id="PS00962">
    <property type="entry name" value="RIBOSOMAL_S2_1"/>
    <property type="match status" value="1"/>
</dbReference>
<dbReference type="PROSITE" id="PS00963">
    <property type="entry name" value="RIBOSOMAL_S2_2"/>
    <property type="match status" value="1"/>
</dbReference>
<proteinExistence type="inferred from homology"/>
<keyword id="KW-0687">Ribonucleoprotein</keyword>
<keyword id="KW-0689">Ribosomal protein</keyword>
<accession>Q8DBG1</accession>
<organism>
    <name type="scientific">Vibrio vulnificus (strain CMCP6)</name>
    <dbReference type="NCBI Taxonomy" id="216895"/>
    <lineage>
        <taxon>Bacteria</taxon>
        <taxon>Pseudomonadati</taxon>
        <taxon>Pseudomonadota</taxon>
        <taxon>Gammaproteobacteria</taxon>
        <taxon>Vibrionales</taxon>
        <taxon>Vibrionaceae</taxon>
        <taxon>Vibrio</taxon>
    </lineage>
</organism>